<comment type="function">
    <text evidence="1">One of the essential components for the initiation of protein synthesis. Stabilizes the binding of IF-2 and IF-3 on the 30S subunit to which N-formylmethionyl-tRNA(fMet) subsequently binds. Helps modulate mRNA selection, yielding the 30S pre-initiation complex (PIC). Upon addition of the 50S ribosomal subunit IF-1, IF-2 and IF-3 are released leaving the mature 70S translation initiation complex.</text>
</comment>
<comment type="subunit">
    <text evidence="1">Component of the 30S ribosomal translation pre-initiation complex which assembles on the 30S ribosome in the order IF-2 and IF-3, IF-1 and N-formylmethionyl-tRNA(fMet); mRNA recruitment can occur at any time during PIC assembly.</text>
</comment>
<comment type="subcellular location">
    <subcellularLocation>
        <location evidence="1">Cytoplasm</location>
    </subcellularLocation>
</comment>
<comment type="similarity">
    <text evidence="1">Belongs to the IF-1 family.</text>
</comment>
<gene>
    <name evidence="1" type="primary">infA</name>
    <name type="ordered locus">Tmel_0976</name>
</gene>
<evidence type="ECO:0000255" key="1">
    <source>
        <dbReference type="HAMAP-Rule" id="MF_00075"/>
    </source>
</evidence>
<reference key="1">
    <citation type="submission" date="2007-05" db="EMBL/GenBank/DDBJ databases">
        <title>Complete sequence of Thermosipho melanesiensis BI429.</title>
        <authorList>
            <consortium name="US DOE Joint Genome Institute"/>
            <person name="Copeland A."/>
            <person name="Lucas S."/>
            <person name="Lapidus A."/>
            <person name="Barry K."/>
            <person name="Glavina del Rio T."/>
            <person name="Dalin E."/>
            <person name="Tice H."/>
            <person name="Pitluck S."/>
            <person name="Chertkov O."/>
            <person name="Brettin T."/>
            <person name="Bruce D."/>
            <person name="Detter J.C."/>
            <person name="Han C."/>
            <person name="Schmutz J."/>
            <person name="Larimer F."/>
            <person name="Land M."/>
            <person name="Hauser L."/>
            <person name="Kyrpides N."/>
            <person name="Mikhailova N."/>
            <person name="Nelson K."/>
            <person name="Gogarten J.P."/>
            <person name="Noll K."/>
            <person name="Richardson P."/>
        </authorList>
    </citation>
    <scope>NUCLEOTIDE SEQUENCE [LARGE SCALE GENOMIC DNA]</scope>
    <source>
        <strain>DSM 12029 / CIP 104789 / BI429</strain>
    </source>
</reference>
<dbReference type="EMBL" id="CP000716">
    <property type="protein sequence ID" value="ABR30837.1"/>
    <property type="molecule type" value="Genomic_DNA"/>
</dbReference>
<dbReference type="RefSeq" id="WP_004101484.1">
    <property type="nucleotide sequence ID" value="NC_009616.1"/>
</dbReference>
<dbReference type="SMR" id="A6LLN6"/>
<dbReference type="STRING" id="391009.Tmel_0976"/>
<dbReference type="KEGG" id="tme:Tmel_0976"/>
<dbReference type="eggNOG" id="COG0361">
    <property type="taxonomic scope" value="Bacteria"/>
</dbReference>
<dbReference type="HOGENOM" id="CLU_151267_1_0_0"/>
<dbReference type="OrthoDB" id="9803250at2"/>
<dbReference type="Proteomes" id="UP000001110">
    <property type="component" value="Chromosome"/>
</dbReference>
<dbReference type="GO" id="GO:0005829">
    <property type="term" value="C:cytosol"/>
    <property type="evidence" value="ECO:0007669"/>
    <property type="project" value="TreeGrafter"/>
</dbReference>
<dbReference type="GO" id="GO:0043022">
    <property type="term" value="F:ribosome binding"/>
    <property type="evidence" value="ECO:0007669"/>
    <property type="project" value="UniProtKB-UniRule"/>
</dbReference>
<dbReference type="GO" id="GO:0019843">
    <property type="term" value="F:rRNA binding"/>
    <property type="evidence" value="ECO:0007669"/>
    <property type="project" value="UniProtKB-UniRule"/>
</dbReference>
<dbReference type="GO" id="GO:0003743">
    <property type="term" value="F:translation initiation factor activity"/>
    <property type="evidence" value="ECO:0007669"/>
    <property type="project" value="UniProtKB-UniRule"/>
</dbReference>
<dbReference type="CDD" id="cd04451">
    <property type="entry name" value="S1_IF1"/>
    <property type="match status" value="1"/>
</dbReference>
<dbReference type="FunFam" id="2.40.50.140:FF:000002">
    <property type="entry name" value="Translation initiation factor IF-1"/>
    <property type="match status" value="1"/>
</dbReference>
<dbReference type="Gene3D" id="2.40.50.140">
    <property type="entry name" value="Nucleic acid-binding proteins"/>
    <property type="match status" value="1"/>
</dbReference>
<dbReference type="HAMAP" id="MF_00075">
    <property type="entry name" value="IF_1"/>
    <property type="match status" value="1"/>
</dbReference>
<dbReference type="InterPro" id="IPR012340">
    <property type="entry name" value="NA-bd_OB-fold"/>
</dbReference>
<dbReference type="InterPro" id="IPR006196">
    <property type="entry name" value="RNA-binding_domain_S1_IF1"/>
</dbReference>
<dbReference type="InterPro" id="IPR003029">
    <property type="entry name" value="S1_domain"/>
</dbReference>
<dbReference type="InterPro" id="IPR004368">
    <property type="entry name" value="TIF_IF1"/>
</dbReference>
<dbReference type="NCBIfam" id="TIGR00008">
    <property type="entry name" value="infA"/>
    <property type="match status" value="1"/>
</dbReference>
<dbReference type="PANTHER" id="PTHR33370">
    <property type="entry name" value="TRANSLATION INITIATION FACTOR IF-1, CHLOROPLASTIC"/>
    <property type="match status" value="1"/>
</dbReference>
<dbReference type="PANTHER" id="PTHR33370:SF1">
    <property type="entry name" value="TRANSLATION INITIATION FACTOR IF-1, CHLOROPLASTIC"/>
    <property type="match status" value="1"/>
</dbReference>
<dbReference type="Pfam" id="PF01176">
    <property type="entry name" value="eIF-1a"/>
    <property type="match status" value="1"/>
</dbReference>
<dbReference type="SMART" id="SM00316">
    <property type="entry name" value="S1"/>
    <property type="match status" value="1"/>
</dbReference>
<dbReference type="SUPFAM" id="SSF50249">
    <property type="entry name" value="Nucleic acid-binding proteins"/>
    <property type="match status" value="1"/>
</dbReference>
<dbReference type="PROSITE" id="PS50832">
    <property type="entry name" value="S1_IF1_TYPE"/>
    <property type="match status" value="1"/>
</dbReference>
<proteinExistence type="inferred from homology"/>
<accession>A6LLN6</accession>
<organism>
    <name type="scientific">Thermosipho melanesiensis (strain DSM 12029 / CIP 104789 / BI429)</name>
    <dbReference type="NCBI Taxonomy" id="391009"/>
    <lineage>
        <taxon>Bacteria</taxon>
        <taxon>Thermotogati</taxon>
        <taxon>Thermotogota</taxon>
        <taxon>Thermotogae</taxon>
        <taxon>Thermotogales</taxon>
        <taxon>Fervidobacteriaceae</taxon>
        <taxon>Thermosipho</taxon>
    </lineage>
</organism>
<name>IF1_THEM4</name>
<sequence length="74" mass="8484">MSNKEDIIKMEGTIVEALPNAMFRVELENGHKILAHISGKMRKNFIRLVPGDKVVVELTIYDLTKGRIVYRKKS</sequence>
<keyword id="KW-0963">Cytoplasm</keyword>
<keyword id="KW-0396">Initiation factor</keyword>
<keyword id="KW-0648">Protein biosynthesis</keyword>
<keyword id="KW-0694">RNA-binding</keyword>
<keyword id="KW-0699">rRNA-binding</keyword>
<protein>
    <recommendedName>
        <fullName evidence="1">Translation initiation factor IF-1</fullName>
    </recommendedName>
</protein>
<feature type="chain" id="PRO_0000338943" description="Translation initiation factor IF-1">
    <location>
        <begin position="1"/>
        <end position="74"/>
    </location>
</feature>
<feature type="domain" description="S1-like" evidence="1">
    <location>
        <begin position="1"/>
        <end position="73"/>
    </location>
</feature>